<dbReference type="EMBL" id="AJ417816">
    <property type="protein sequence ID" value="CAD10622.1"/>
    <property type="molecule type" value="mRNA"/>
</dbReference>
<dbReference type="EMBL" id="AJ417817">
    <property type="protein sequence ID" value="CAD10623.1"/>
    <property type="molecule type" value="mRNA"/>
</dbReference>
<dbReference type="RefSeq" id="NP_788804.1">
    <molecule id="Q8MI01-1"/>
    <property type="nucleotide sequence ID" value="NM_176631.1"/>
</dbReference>
<dbReference type="FunCoup" id="Q8MI01">
    <property type="interactions" value="23"/>
</dbReference>
<dbReference type="STRING" id="9913.ENSBTAP00000038673"/>
<dbReference type="GlyCosmos" id="Q8MI01">
    <property type="glycosylation" value="15 sites, No reported glycans"/>
</dbReference>
<dbReference type="GlyGen" id="Q8MI01">
    <property type="glycosylation" value="15 sites"/>
</dbReference>
<dbReference type="iPTMnet" id="Q8MI01"/>
<dbReference type="PaxDb" id="9913-ENSBTAP00000038673"/>
<dbReference type="GeneID" id="337919"/>
<dbReference type="KEGG" id="bta:337919"/>
<dbReference type="CTD" id="143662"/>
<dbReference type="eggNOG" id="ENOG502S7P0">
    <property type="taxonomic scope" value="Eukaryota"/>
</dbReference>
<dbReference type="InParanoid" id="Q8MI01"/>
<dbReference type="OrthoDB" id="9950822at2759"/>
<dbReference type="Proteomes" id="UP000009136">
    <property type="component" value="Unplaced"/>
</dbReference>
<dbReference type="GO" id="GO:0005576">
    <property type="term" value="C:extracellular region"/>
    <property type="evidence" value="ECO:0007669"/>
    <property type="project" value="UniProtKB-SubCell"/>
</dbReference>
<dbReference type="GO" id="GO:0005886">
    <property type="term" value="C:plasma membrane"/>
    <property type="evidence" value="ECO:0007669"/>
    <property type="project" value="UniProtKB-SubCell"/>
</dbReference>
<dbReference type="InterPro" id="IPR031371">
    <property type="entry name" value="Mucin-15"/>
</dbReference>
<dbReference type="PANTHER" id="PTHR45427">
    <property type="entry name" value="MUCIN-15"/>
    <property type="match status" value="1"/>
</dbReference>
<dbReference type="PANTHER" id="PTHR45427:SF1">
    <property type="entry name" value="MUCIN-15"/>
    <property type="match status" value="1"/>
</dbReference>
<dbReference type="Pfam" id="PF15672">
    <property type="entry name" value="Mucin15"/>
    <property type="match status" value="1"/>
</dbReference>
<name>MUC15_BOVIN</name>
<evidence type="ECO:0000255" key="1"/>
<evidence type="ECO:0000256" key="2">
    <source>
        <dbReference type="SAM" id="MobiDB-lite"/>
    </source>
</evidence>
<evidence type="ECO:0000269" key="3">
    <source>
    </source>
</evidence>
<evidence type="ECO:0000303" key="4">
    <source>
    </source>
</evidence>
<evidence type="ECO:0000305" key="5"/>
<accession>Q8MI01</accession>
<accession>Q8MI16</accession>
<sequence length="330" mass="35715">MLTSAKILLISILSSLLLFGSHGEEGQKTNTTESTAEDLKTMENQSVPLESKANLTSDKENRETSNPKASNFSFEDPSNKTHETGFYSNLSTDNSSRSPSLMPTLSPRSPSTHSFVSKLPWNSSIADNSLLPASAPPNTTVPVSSENFTLSSINDTMKAPDNSSITVSNLPSGPNTTSVTPMVTEGWPTTTRESMEGFTVYQETTLHPTLKFTNNSKIFPNTSDPQEENRNTGVVFGAILGAILGASLLSLVGYLLCGKRKTDSFSHRRLYDDRNEPVLRLDNAPEPYDMSFGNSSYYNPTANDSSTSAGGENAHDSIPMDDIPPLRTSV</sequence>
<protein>
    <recommendedName>
        <fullName>Mucin-15</fullName>
        <shortName>MUC-15</shortName>
    </recommendedName>
    <alternativeName>
        <fullName>Component II</fullName>
    </alternativeName>
    <alternativeName>
        <fullName>Glycoprotein 4</fullName>
    </alternativeName>
    <alternativeName>
        <fullName>Glycoprotein C</fullName>
    </alternativeName>
    <alternativeName>
        <fullName>PAS3</fullName>
    </alternativeName>
    <alternativeName>
        <fullName>PASIII</fullName>
    </alternativeName>
</protein>
<gene>
    <name type="primary">MUC15</name>
</gene>
<feature type="signal peptide" evidence="3">
    <location>
        <begin position="1"/>
        <end position="23"/>
    </location>
</feature>
<feature type="chain" id="PRO_0000019287" description="Mucin-15">
    <location>
        <begin position="24"/>
        <end position="330"/>
    </location>
</feature>
<feature type="topological domain" description="Extracellular" evidence="1">
    <location>
        <begin position="24"/>
        <end position="232"/>
    </location>
</feature>
<feature type="transmembrane region" description="Helical" evidence="1">
    <location>
        <begin position="233"/>
        <end position="253"/>
    </location>
</feature>
<feature type="topological domain" description="Cytoplasmic" evidence="1">
    <location>
        <begin position="254"/>
        <end position="330"/>
    </location>
</feature>
<feature type="region of interest" description="Disordered" evidence="2">
    <location>
        <begin position="23"/>
        <end position="115"/>
    </location>
</feature>
<feature type="region of interest" description="Disordered" evidence="2">
    <location>
        <begin position="164"/>
        <end position="185"/>
    </location>
</feature>
<feature type="region of interest" description="Disordered" evidence="2">
    <location>
        <begin position="279"/>
        <end position="330"/>
    </location>
</feature>
<feature type="compositionally biased region" description="Polar residues" evidence="2">
    <location>
        <begin position="42"/>
        <end position="56"/>
    </location>
</feature>
<feature type="compositionally biased region" description="Polar residues" evidence="2">
    <location>
        <begin position="86"/>
        <end position="115"/>
    </location>
</feature>
<feature type="compositionally biased region" description="Polar residues" evidence="2">
    <location>
        <begin position="292"/>
        <end position="310"/>
    </location>
</feature>
<feature type="glycosylation site" description="N-linked (GlcNAc...) asparagine" evidence="3">
    <location>
        <position position="30"/>
    </location>
</feature>
<feature type="glycosylation site" description="N-linked (GlcNAc...) asparagine" evidence="1">
    <location>
        <position position="44"/>
    </location>
</feature>
<feature type="glycosylation site" description="N-linked (GlcNAc...) asparagine" evidence="1">
    <location>
        <position position="54"/>
    </location>
</feature>
<feature type="glycosylation site" description="N-linked (GlcNAc...) asparagine" evidence="3">
    <location>
        <position position="71"/>
    </location>
</feature>
<feature type="glycosylation site" description="N-linked (GlcNAc...) asparagine" evidence="3">
    <location>
        <position position="79"/>
    </location>
</feature>
<feature type="glycosylation site" description="N-linked (GlcNAc...) asparagine" evidence="1">
    <location>
        <position position="89"/>
    </location>
</feature>
<feature type="glycosylation site" description="N-linked (GlcNAc...) asparagine" evidence="3">
    <location>
        <position position="94"/>
    </location>
</feature>
<feature type="glycosylation site" description="N-linked (GlcNAc...) asparagine" evidence="3">
    <location>
        <position position="122"/>
    </location>
</feature>
<feature type="glycosylation site" description="N-linked (GlcNAc...) asparagine" evidence="3">
    <location>
        <position position="138"/>
    </location>
</feature>
<feature type="glycosylation site" description="N-linked (GlcNAc...) asparagine" evidence="3">
    <location>
        <position position="147"/>
    </location>
</feature>
<feature type="glycosylation site" description="N-linked (GlcNAc...) asparagine" evidence="3">
    <location>
        <position position="154"/>
    </location>
</feature>
<feature type="glycosylation site" description="N-linked (GlcNAc...) asparagine" evidence="3">
    <location>
        <position position="162"/>
    </location>
</feature>
<feature type="glycosylation site" description="N-linked (GlcNAc...) asparagine" evidence="3">
    <location>
        <position position="175"/>
    </location>
</feature>
<feature type="glycosylation site" description="N-linked (GlcNAc...) asparagine" evidence="3">
    <location>
        <position position="214"/>
    </location>
</feature>
<feature type="glycosylation site" description="N-linked (GlcNAc...) asparagine" evidence="1">
    <location>
        <position position="221"/>
    </location>
</feature>
<feature type="splice variant" id="VSP_010824" description="In isoform 2." evidence="4">
    <location>
        <begin position="228"/>
        <end position="277"/>
    </location>
</feature>
<reference key="1">
    <citation type="journal article" date="2002" name="Eur. J. Biochem.">
        <title>Isolation and characterization of MUC15, a novel cell membrane associated mucin.</title>
        <authorList>
            <person name="Pallesen L.T."/>
            <person name="Berglund L."/>
            <person name="Rasmussen L.K."/>
            <person name="Petersen T.E."/>
            <person name="Rasmussen J.T."/>
        </authorList>
    </citation>
    <scope>NUCLEOTIDE SEQUENCE [MRNA] (ISOFORMS 1 AND 2)</scope>
    <scope>PROTEIN SEQUENCE OF 24-53; 64-183; 186-193; 197-227; 250-254; 260-268 AND 270-308</scope>
    <scope>TISSUE SPECIFICITY</scope>
    <scope>GLYCOSYLATION</scope>
    <source>
        <strain>Holstein</strain>
        <tissue>Lactating mammary gland</tissue>
    </source>
</reference>
<proteinExistence type="evidence at protein level"/>
<comment type="subcellular location">
    <molecule>Isoform 1</molecule>
    <subcellularLocation>
        <location evidence="5">Cell membrane</location>
        <topology evidence="5">Single-pass type I membrane protein</topology>
    </subcellularLocation>
</comment>
<comment type="subcellular location">
    <molecule>Isoform 2</molecule>
    <subcellularLocation>
        <location evidence="5">Secreted</location>
    </subcellularLocation>
</comment>
<comment type="alternative products">
    <event type="alternative splicing"/>
    <isoform>
        <id>Q8MI01-1</id>
        <name>1</name>
        <name>MUC15</name>
        <sequence type="displayed"/>
    </isoform>
    <isoform>
        <id>Q8MI01-2</id>
        <name>2</name>
        <name>MUC15/S</name>
        <sequence type="described" ref="VSP_010824"/>
    </isoform>
</comment>
<comment type="tissue specificity">
    <text evidence="3">Mainly expressed on apical surfaces of the mammary epithelial cells.</text>
</comment>
<comment type="PTM">
    <text evidence="3">Highly glycosylated (N- and O-linked carbohydrates).</text>
</comment>
<organism>
    <name type="scientific">Bos taurus</name>
    <name type="common">Bovine</name>
    <dbReference type="NCBI Taxonomy" id="9913"/>
    <lineage>
        <taxon>Eukaryota</taxon>
        <taxon>Metazoa</taxon>
        <taxon>Chordata</taxon>
        <taxon>Craniata</taxon>
        <taxon>Vertebrata</taxon>
        <taxon>Euteleostomi</taxon>
        <taxon>Mammalia</taxon>
        <taxon>Eutheria</taxon>
        <taxon>Laurasiatheria</taxon>
        <taxon>Artiodactyla</taxon>
        <taxon>Ruminantia</taxon>
        <taxon>Pecora</taxon>
        <taxon>Bovidae</taxon>
        <taxon>Bovinae</taxon>
        <taxon>Bos</taxon>
    </lineage>
</organism>
<keyword id="KW-0025">Alternative splicing</keyword>
<keyword id="KW-1003">Cell membrane</keyword>
<keyword id="KW-0903">Direct protein sequencing</keyword>
<keyword id="KW-0325">Glycoprotein</keyword>
<keyword id="KW-0472">Membrane</keyword>
<keyword id="KW-1185">Reference proteome</keyword>
<keyword id="KW-0964">Secreted</keyword>
<keyword id="KW-0732">Signal</keyword>
<keyword id="KW-0812">Transmembrane</keyword>
<keyword id="KW-1133">Transmembrane helix</keyword>